<accession>C4ZXP1</accession>
<organism>
    <name type="scientific">Escherichia coli (strain K12 / MC4100 / BW2952)</name>
    <dbReference type="NCBI Taxonomy" id="595496"/>
    <lineage>
        <taxon>Bacteria</taxon>
        <taxon>Pseudomonadati</taxon>
        <taxon>Pseudomonadota</taxon>
        <taxon>Gammaproteobacteria</taxon>
        <taxon>Enterobacterales</taxon>
        <taxon>Enterobacteriaceae</taxon>
        <taxon>Escherichia</taxon>
    </lineage>
</organism>
<dbReference type="EC" id="2.7.7.6" evidence="1"/>
<dbReference type="EMBL" id="CP001396">
    <property type="protein sequence ID" value="ACR65494.1"/>
    <property type="molecule type" value="Genomic_DNA"/>
</dbReference>
<dbReference type="RefSeq" id="WP_000135058.1">
    <property type="nucleotide sequence ID" value="NC_012759.1"/>
</dbReference>
<dbReference type="SMR" id="C4ZXP1"/>
<dbReference type="GeneID" id="98390719"/>
<dbReference type="KEGG" id="ebw:BWG_3340"/>
<dbReference type="HOGENOM" id="CLU_125406_5_3_6"/>
<dbReference type="GO" id="GO:0000428">
    <property type="term" value="C:DNA-directed RNA polymerase complex"/>
    <property type="evidence" value="ECO:0007669"/>
    <property type="project" value="UniProtKB-KW"/>
</dbReference>
<dbReference type="GO" id="GO:0003677">
    <property type="term" value="F:DNA binding"/>
    <property type="evidence" value="ECO:0007669"/>
    <property type="project" value="UniProtKB-UniRule"/>
</dbReference>
<dbReference type="GO" id="GO:0003899">
    <property type="term" value="F:DNA-directed RNA polymerase activity"/>
    <property type="evidence" value="ECO:0007669"/>
    <property type="project" value="UniProtKB-UniRule"/>
</dbReference>
<dbReference type="GO" id="GO:0006351">
    <property type="term" value="P:DNA-templated transcription"/>
    <property type="evidence" value="ECO:0007669"/>
    <property type="project" value="UniProtKB-UniRule"/>
</dbReference>
<dbReference type="FunFam" id="3.90.940.10:FF:000001">
    <property type="entry name" value="DNA-directed RNA polymerase subunit omega"/>
    <property type="match status" value="1"/>
</dbReference>
<dbReference type="Gene3D" id="3.90.940.10">
    <property type="match status" value="1"/>
</dbReference>
<dbReference type="HAMAP" id="MF_00366">
    <property type="entry name" value="RNApol_bact_RpoZ"/>
    <property type="match status" value="1"/>
</dbReference>
<dbReference type="InterPro" id="IPR003716">
    <property type="entry name" value="DNA-dir_RNA_pol_omega"/>
</dbReference>
<dbReference type="InterPro" id="IPR006110">
    <property type="entry name" value="Pol_omega/Rpo6/RPB6"/>
</dbReference>
<dbReference type="InterPro" id="IPR036161">
    <property type="entry name" value="RPB6/omega-like_sf"/>
</dbReference>
<dbReference type="NCBIfam" id="TIGR00690">
    <property type="entry name" value="rpoZ"/>
    <property type="match status" value="1"/>
</dbReference>
<dbReference type="PANTHER" id="PTHR34476">
    <property type="entry name" value="DNA-DIRECTED RNA POLYMERASE SUBUNIT OMEGA"/>
    <property type="match status" value="1"/>
</dbReference>
<dbReference type="PANTHER" id="PTHR34476:SF1">
    <property type="entry name" value="DNA-DIRECTED RNA POLYMERASE SUBUNIT OMEGA"/>
    <property type="match status" value="1"/>
</dbReference>
<dbReference type="Pfam" id="PF01192">
    <property type="entry name" value="RNA_pol_Rpb6"/>
    <property type="match status" value="1"/>
</dbReference>
<dbReference type="SMART" id="SM01409">
    <property type="entry name" value="RNA_pol_Rpb6"/>
    <property type="match status" value="1"/>
</dbReference>
<dbReference type="SUPFAM" id="SSF63562">
    <property type="entry name" value="RPB6/omega subunit-like"/>
    <property type="match status" value="1"/>
</dbReference>
<gene>
    <name evidence="1" type="primary">rpoZ</name>
    <name type="ordered locus">BWG_3340</name>
</gene>
<proteinExistence type="inferred from homology"/>
<keyword id="KW-0240">DNA-directed RNA polymerase</keyword>
<keyword id="KW-0548">Nucleotidyltransferase</keyword>
<keyword id="KW-0804">Transcription</keyword>
<keyword id="KW-0808">Transferase</keyword>
<feature type="chain" id="PRO_1000205515" description="DNA-directed RNA polymerase subunit omega">
    <location>
        <begin position="1"/>
        <end position="91"/>
    </location>
</feature>
<evidence type="ECO:0000255" key="1">
    <source>
        <dbReference type="HAMAP-Rule" id="MF_00366"/>
    </source>
</evidence>
<protein>
    <recommendedName>
        <fullName evidence="1">DNA-directed RNA polymerase subunit omega</fullName>
        <shortName evidence="1">RNAP omega subunit</shortName>
        <ecNumber evidence="1">2.7.7.6</ecNumber>
    </recommendedName>
    <alternativeName>
        <fullName evidence="1">RNA polymerase omega subunit</fullName>
    </alternativeName>
    <alternativeName>
        <fullName evidence="1">Transcriptase subunit omega</fullName>
    </alternativeName>
</protein>
<comment type="function">
    <text evidence="1">Promotes RNA polymerase assembly. Latches the N- and C-terminal regions of the beta' subunit thereby facilitating its interaction with the beta and alpha subunits.</text>
</comment>
<comment type="catalytic activity">
    <reaction evidence="1">
        <text>RNA(n) + a ribonucleoside 5'-triphosphate = RNA(n+1) + diphosphate</text>
        <dbReference type="Rhea" id="RHEA:21248"/>
        <dbReference type="Rhea" id="RHEA-COMP:14527"/>
        <dbReference type="Rhea" id="RHEA-COMP:17342"/>
        <dbReference type="ChEBI" id="CHEBI:33019"/>
        <dbReference type="ChEBI" id="CHEBI:61557"/>
        <dbReference type="ChEBI" id="CHEBI:140395"/>
        <dbReference type="EC" id="2.7.7.6"/>
    </reaction>
</comment>
<comment type="subunit">
    <text evidence="1">The RNAP catalytic core consists of 2 alpha, 1 beta, 1 beta' and 1 omega subunit. When a sigma factor is associated with the core the holoenzyme is formed, which can initiate transcription.</text>
</comment>
<comment type="similarity">
    <text evidence="1">Belongs to the RNA polymerase subunit omega family.</text>
</comment>
<sequence length="91" mass="10237">MARVTVQDAVEKIGNRFDLVLVAARRARQMQVGGKDPLVPEENDKTTVIALREIEEGLINNQILDVRERQEQQEQEAAELQAVTAIAEGRR</sequence>
<reference key="1">
    <citation type="journal article" date="2009" name="J. Bacteriol.">
        <title>Genomic sequencing reveals regulatory mutations and recombinational events in the widely used MC4100 lineage of Escherichia coli K-12.</title>
        <authorList>
            <person name="Ferenci T."/>
            <person name="Zhou Z."/>
            <person name="Betteridge T."/>
            <person name="Ren Y."/>
            <person name="Liu Y."/>
            <person name="Feng L."/>
            <person name="Reeves P.R."/>
            <person name="Wang L."/>
        </authorList>
    </citation>
    <scope>NUCLEOTIDE SEQUENCE [LARGE SCALE GENOMIC DNA]</scope>
    <source>
        <strain>K12 / MC4100 / BW2952</strain>
    </source>
</reference>
<name>RPOZ_ECOBW</name>